<protein>
    <recommendedName>
        <fullName evidence="1">Glutamate--tRNA ligase</fullName>
        <ecNumber evidence="1">6.1.1.17</ecNumber>
    </recommendedName>
    <alternativeName>
        <fullName evidence="1">Glutamyl-tRNA synthetase</fullName>
        <shortName evidence="1">GluRS</shortName>
    </alternativeName>
</protein>
<evidence type="ECO:0000255" key="1">
    <source>
        <dbReference type="HAMAP-Rule" id="MF_00022"/>
    </source>
</evidence>
<evidence type="ECO:0000256" key="2">
    <source>
        <dbReference type="SAM" id="MobiDB-lite"/>
    </source>
</evidence>
<comment type="function">
    <text evidence="1">Catalyzes the attachment of glutamate to tRNA(Glu) in a two-step reaction: glutamate is first activated by ATP to form Glu-AMP and then transferred to the acceptor end of tRNA(Glu).</text>
</comment>
<comment type="catalytic activity">
    <reaction evidence="1">
        <text>tRNA(Glu) + L-glutamate + ATP = L-glutamyl-tRNA(Glu) + AMP + diphosphate</text>
        <dbReference type="Rhea" id="RHEA:23540"/>
        <dbReference type="Rhea" id="RHEA-COMP:9663"/>
        <dbReference type="Rhea" id="RHEA-COMP:9680"/>
        <dbReference type="ChEBI" id="CHEBI:29985"/>
        <dbReference type="ChEBI" id="CHEBI:30616"/>
        <dbReference type="ChEBI" id="CHEBI:33019"/>
        <dbReference type="ChEBI" id="CHEBI:78442"/>
        <dbReference type="ChEBI" id="CHEBI:78520"/>
        <dbReference type="ChEBI" id="CHEBI:456215"/>
        <dbReference type="EC" id="6.1.1.17"/>
    </reaction>
</comment>
<comment type="subunit">
    <text evidence="1">Monomer.</text>
</comment>
<comment type="subcellular location">
    <subcellularLocation>
        <location evidence="1">Cytoplasm</location>
    </subcellularLocation>
</comment>
<comment type="similarity">
    <text evidence="1">Belongs to the class-I aminoacyl-tRNA synthetase family. Glutamate--tRNA ligase type 1 subfamily.</text>
</comment>
<sequence>MTDDASTLHPTVPADAPVRVRFCPSPTGTPHVGLIRTALFNWAWARHTGGTLVFRIEDTDAARDSEESFQQILDALDWLGITWDEGVNVGGPHEPYRQSQRGEIYQDVLAKLVDSGYVYEDFSTPEEVEQRHRAKGEDPKRGYDNYDRDLTDEQKAAFRAEGRQPVLRLRMPDEDISFTDLVRGEITFKAGSVPDFVVARANGKPLYTLVNPVDDALMGITQVLRGEDLLSSTPRQIALYRALVAIGVAEFIPEFGHLPYVMGEGNKKLSKRDPESNLFHHRDNGFIPEGLLNYLALLGWSLSADEDIFTVEQLVANFDIHDVLANPARFDVKKATAINGTHVRMLDPQDFRDRLVPYLRAAGLVGETLTPRENEILDRAAPLVQERMNLLGETEGLLGFLFRGDDEIVVAPDAAKQLKDSAPEVLDAALAALEPLDDFTAEAIETALREAIVDGLGIKPRLAFGPVRTAVSGQRISPPLFESLEILGRESSLARIAALRAELAAN</sequence>
<keyword id="KW-0030">Aminoacyl-tRNA synthetase</keyword>
<keyword id="KW-0067">ATP-binding</keyword>
<keyword id="KW-0963">Cytoplasm</keyword>
<keyword id="KW-0436">Ligase</keyword>
<keyword id="KW-0547">Nucleotide-binding</keyword>
<keyword id="KW-0648">Protein biosynthesis</keyword>
<keyword id="KW-1185">Reference proteome</keyword>
<name>SYE_KOCRD</name>
<dbReference type="EC" id="6.1.1.17" evidence="1"/>
<dbReference type="EMBL" id="AP009152">
    <property type="protein sequence ID" value="BAG29375.1"/>
    <property type="molecule type" value="Genomic_DNA"/>
</dbReference>
<dbReference type="RefSeq" id="WP_012398096.1">
    <property type="nucleotide sequence ID" value="NC_010617.1"/>
</dbReference>
<dbReference type="SMR" id="B2GFK2"/>
<dbReference type="STRING" id="378753.KRH_10280"/>
<dbReference type="KEGG" id="krh:KRH_10280"/>
<dbReference type="eggNOG" id="COG0008">
    <property type="taxonomic scope" value="Bacteria"/>
</dbReference>
<dbReference type="HOGENOM" id="CLU_015768_6_1_11"/>
<dbReference type="OrthoDB" id="9807503at2"/>
<dbReference type="Proteomes" id="UP000008838">
    <property type="component" value="Chromosome"/>
</dbReference>
<dbReference type="GO" id="GO:0005829">
    <property type="term" value="C:cytosol"/>
    <property type="evidence" value="ECO:0007669"/>
    <property type="project" value="TreeGrafter"/>
</dbReference>
<dbReference type="GO" id="GO:0005524">
    <property type="term" value="F:ATP binding"/>
    <property type="evidence" value="ECO:0007669"/>
    <property type="project" value="UniProtKB-UniRule"/>
</dbReference>
<dbReference type="GO" id="GO:0004818">
    <property type="term" value="F:glutamate-tRNA ligase activity"/>
    <property type="evidence" value="ECO:0007669"/>
    <property type="project" value="UniProtKB-UniRule"/>
</dbReference>
<dbReference type="GO" id="GO:0000049">
    <property type="term" value="F:tRNA binding"/>
    <property type="evidence" value="ECO:0007669"/>
    <property type="project" value="InterPro"/>
</dbReference>
<dbReference type="GO" id="GO:0008270">
    <property type="term" value="F:zinc ion binding"/>
    <property type="evidence" value="ECO:0007669"/>
    <property type="project" value="InterPro"/>
</dbReference>
<dbReference type="GO" id="GO:0006424">
    <property type="term" value="P:glutamyl-tRNA aminoacylation"/>
    <property type="evidence" value="ECO:0007669"/>
    <property type="project" value="UniProtKB-UniRule"/>
</dbReference>
<dbReference type="CDD" id="cd00808">
    <property type="entry name" value="GluRS_core"/>
    <property type="match status" value="1"/>
</dbReference>
<dbReference type="FunFam" id="3.40.50.620:FF:000149">
    <property type="entry name" value="Glutamate--tRNA ligase"/>
    <property type="match status" value="1"/>
</dbReference>
<dbReference type="Gene3D" id="1.10.10.350">
    <property type="match status" value="1"/>
</dbReference>
<dbReference type="Gene3D" id="1.10.8.70">
    <property type="entry name" value="Glutamate-tRNA synthetase, class I, anticodon-binding domain 1"/>
    <property type="match status" value="1"/>
</dbReference>
<dbReference type="Gene3D" id="1.10.1160.10">
    <property type="entry name" value="Glutamyl-trna Synthetase, Domain 2"/>
    <property type="match status" value="1"/>
</dbReference>
<dbReference type="Gene3D" id="3.90.800.10">
    <property type="entry name" value="Glutamyl-tRNA Synthetase, Domain 3"/>
    <property type="match status" value="1"/>
</dbReference>
<dbReference type="Gene3D" id="3.40.50.620">
    <property type="entry name" value="HUPs"/>
    <property type="match status" value="1"/>
</dbReference>
<dbReference type="HAMAP" id="MF_00022">
    <property type="entry name" value="Glu_tRNA_synth_type1"/>
    <property type="match status" value="1"/>
</dbReference>
<dbReference type="InterPro" id="IPR045462">
    <property type="entry name" value="aa-tRNA-synth_I_cd-bd"/>
</dbReference>
<dbReference type="InterPro" id="IPR020751">
    <property type="entry name" value="aa-tRNA-synth_I_codon-bd_sub2"/>
</dbReference>
<dbReference type="InterPro" id="IPR008925">
    <property type="entry name" value="aa_tRNA-synth_I_cd-bd_sf"/>
</dbReference>
<dbReference type="InterPro" id="IPR004527">
    <property type="entry name" value="Glu-tRNA-ligase_bac/mito"/>
</dbReference>
<dbReference type="InterPro" id="IPR020752">
    <property type="entry name" value="Glu-tRNA-synth_I_codon-bd_sub1"/>
</dbReference>
<dbReference type="InterPro" id="IPR000924">
    <property type="entry name" value="Glu/Gln-tRNA-synth"/>
</dbReference>
<dbReference type="InterPro" id="IPR020058">
    <property type="entry name" value="Glu/Gln-tRNA-synth_Ib_cat-dom"/>
</dbReference>
<dbReference type="InterPro" id="IPR020061">
    <property type="entry name" value="Glu_tRNA_lig_a-bdl"/>
</dbReference>
<dbReference type="InterPro" id="IPR049940">
    <property type="entry name" value="GluQ/Sye"/>
</dbReference>
<dbReference type="InterPro" id="IPR033910">
    <property type="entry name" value="GluRS_core"/>
</dbReference>
<dbReference type="InterPro" id="IPR014729">
    <property type="entry name" value="Rossmann-like_a/b/a_fold"/>
</dbReference>
<dbReference type="NCBIfam" id="TIGR00464">
    <property type="entry name" value="gltX_bact"/>
    <property type="match status" value="1"/>
</dbReference>
<dbReference type="PANTHER" id="PTHR43311">
    <property type="entry name" value="GLUTAMATE--TRNA LIGASE"/>
    <property type="match status" value="1"/>
</dbReference>
<dbReference type="PANTHER" id="PTHR43311:SF2">
    <property type="entry name" value="GLUTAMATE--TRNA LIGASE, MITOCHONDRIAL-RELATED"/>
    <property type="match status" value="1"/>
</dbReference>
<dbReference type="Pfam" id="PF19269">
    <property type="entry name" value="Anticodon_2"/>
    <property type="match status" value="1"/>
</dbReference>
<dbReference type="Pfam" id="PF00749">
    <property type="entry name" value="tRNA-synt_1c"/>
    <property type="match status" value="1"/>
</dbReference>
<dbReference type="PRINTS" id="PR00987">
    <property type="entry name" value="TRNASYNTHGLU"/>
</dbReference>
<dbReference type="SUPFAM" id="SSF48163">
    <property type="entry name" value="An anticodon-binding domain of class I aminoacyl-tRNA synthetases"/>
    <property type="match status" value="1"/>
</dbReference>
<dbReference type="SUPFAM" id="SSF52374">
    <property type="entry name" value="Nucleotidylyl transferase"/>
    <property type="match status" value="1"/>
</dbReference>
<feature type="chain" id="PRO_0000367694" description="Glutamate--tRNA ligase">
    <location>
        <begin position="1"/>
        <end position="506"/>
    </location>
</feature>
<feature type="region of interest" description="Disordered" evidence="2">
    <location>
        <begin position="124"/>
        <end position="147"/>
    </location>
</feature>
<feature type="short sequence motif" description="'HIGH' region" evidence="1">
    <location>
        <begin position="24"/>
        <end position="34"/>
    </location>
</feature>
<feature type="short sequence motif" description="'KMSKS' region" evidence="1">
    <location>
        <begin position="268"/>
        <end position="272"/>
    </location>
</feature>
<feature type="compositionally biased region" description="Basic and acidic residues" evidence="2">
    <location>
        <begin position="128"/>
        <end position="147"/>
    </location>
</feature>
<feature type="binding site" evidence="1">
    <location>
        <position position="271"/>
    </location>
    <ligand>
        <name>ATP</name>
        <dbReference type="ChEBI" id="CHEBI:30616"/>
    </ligand>
</feature>
<organism>
    <name type="scientific">Kocuria rhizophila (strain ATCC 9341 / DSM 348 / NBRC 103217 / DC2201)</name>
    <dbReference type="NCBI Taxonomy" id="378753"/>
    <lineage>
        <taxon>Bacteria</taxon>
        <taxon>Bacillati</taxon>
        <taxon>Actinomycetota</taxon>
        <taxon>Actinomycetes</taxon>
        <taxon>Micrococcales</taxon>
        <taxon>Micrococcaceae</taxon>
        <taxon>Kocuria</taxon>
    </lineage>
</organism>
<accession>B2GFK2</accession>
<gene>
    <name evidence="1" type="primary">gltX</name>
    <name type="ordered locus">KRH_10280</name>
</gene>
<reference key="1">
    <citation type="journal article" date="2008" name="J. Bacteriol.">
        <title>Complete genome sequence of the soil actinomycete Kocuria rhizophila.</title>
        <authorList>
            <person name="Takarada H."/>
            <person name="Sekine M."/>
            <person name="Kosugi H."/>
            <person name="Matsuo Y."/>
            <person name="Fujisawa T."/>
            <person name="Omata S."/>
            <person name="Kishi E."/>
            <person name="Shimizu A."/>
            <person name="Tsukatani N."/>
            <person name="Tanikawa S."/>
            <person name="Fujita N."/>
            <person name="Harayama S."/>
        </authorList>
    </citation>
    <scope>NUCLEOTIDE SEQUENCE [LARGE SCALE GENOMIC DNA]</scope>
    <source>
        <strain>ATCC 9341 / DSM 348 / NBRC 103217 / DC2201</strain>
    </source>
</reference>
<proteinExistence type="inferred from homology"/>